<keyword id="KW-0963">Cytoplasm</keyword>
<keyword id="KW-0227">DNA damage</keyword>
<keyword id="KW-0233">DNA recombination</keyword>
<keyword id="KW-0234">DNA repair</keyword>
<keyword id="KW-0238">DNA-binding</keyword>
<name>RUVA_LEGPL</name>
<protein>
    <recommendedName>
        <fullName evidence="1">Holliday junction branch migration complex subunit RuvA</fullName>
    </recommendedName>
</protein>
<reference key="1">
    <citation type="journal article" date="2004" name="Nat. Genet.">
        <title>Evidence in the Legionella pneumophila genome for exploitation of host cell functions and high genome plasticity.</title>
        <authorList>
            <person name="Cazalet C."/>
            <person name="Rusniok C."/>
            <person name="Brueggemann H."/>
            <person name="Zidane N."/>
            <person name="Magnier A."/>
            <person name="Ma L."/>
            <person name="Tichit M."/>
            <person name="Jarraud S."/>
            <person name="Bouchier C."/>
            <person name="Vandenesch F."/>
            <person name="Kunst F."/>
            <person name="Etienne J."/>
            <person name="Glaser P."/>
            <person name="Buchrieser C."/>
        </authorList>
    </citation>
    <scope>NUCLEOTIDE SEQUENCE [LARGE SCALE GENOMIC DNA]</scope>
    <source>
        <strain>Lens</strain>
    </source>
</reference>
<comment type="function">
    <text evidence="1">The RuvA-RuvB-RuvC complex processes Holliday junction (HJ) DNA during genetic recombination and DNA repair, while the RuvA-RuvB complex plays an important role in the rescue of blocked DNA replication forks via replication fork reversal (RFR). RuvA specifically binds to HJ cruciform DNA, conferring on it an open structure. The RuvB hexamer acts as an ATP-dependent pump, pulling dsDNA into and through the RuvAB complex. HJ branch migration allows RuvC to scan DNA until it finds its consensus sequence, where it cleaves and resolves the cruciform DNA.</text>
</comment>
<comment type="subunit">
    <text evidence="1">Homotetramer. Forms an RuvA(8)-RuvB(12)-Holliday junction (HJ) complex. HJ DNA is sandwiched between 2 RuvA tetramers; dsDNA enters through RuvA and exits via RuvB. An RuvB hexamer assembles on each DNA strand where it exits the tetramer. Each RuvB hexamer is contacted by two RuvA subunits (via domain III) on 2 adjacent RuvB subunits; this complex drives branch migration. In the full resolvosome a probable DNA-RuvA(4)-RuvB(12)-RuvC(2) complex forms which resolves the HJ.</text>
</comment>
<comment type="subcellular location">
    <subcellularLocation>
        <location evidence="1">Cytoplasm</location>
    </subcellularLocation>
</comment>
<comment type="domain">
    <text evidence="1">Has three domains with a flexible linker between the domains II and III and assumes an 'L' shape. Domain III is highly mobile and contacts RuvB.</text>
</comment>
<comment type="similarity">
    <text evidence="1">Belongs to the RuvA family.</text>
</comment>
<feature type="chain" id="PRO_0000224877" description="Holliday junction branch migration complex subunit RuvA">
    <location>
        <begin position="1"/>
        <end position="199"/>
    </location>
</feature>
<feature type="region of interest" description="Domain I" evidence="1">
    <location>
        <begin position="1"/>
        <end position="65"/>
    </location>
</feature>
<feature type="region of interest" description="Domain II" evidence="1">
    <location>
        <begin position="66"/>
        <end position="144"/>
    </location>
</feature>
<feature type="region of interest" description="Flexible linker" evidence="1">
    <location>
        <begin position="144"/>
        <end position="148"/>
    </location>
</feature>
<feature type="region of interest" description="Domain III" evidence="1">
    <location>
        <begin position="149"/>
        <end position="199"/>
    </location>
</feature>
<gene>
    <name evidence="1" type="primary">ruvA</name>
    <name type="ordered locus">lpl1251</name>
</gene>
<sequence>MIGWLHGQIIDKHQPGKLVLDVNGVGYDVETSLNTFFQIENGNQPIGLHIHTIVREDALLLYGFLDKEERSLFRSLIKVNGVGPKLAMTVLSSISPKEFIQCIHQENAALLTKLPGIGKKTAERLVVEMRDSIKQFDGSVSDTFQKQAGSTHSQQEAISALEALGYKPQEAWKVVNKIDNGNKSCEQLIREALQILSSR</sequence>
<organism>
    <name type="scientific">Legionella pneumophila (strain Lens)</name>
    <dbReference type="NCBI Taxonomy" id="297245"/>
    <lineage>
        <taxon>Bacteria</taxon>
        <taxon>Pseudomonadati</taxon>
        <taxon>Pseudomonadota</taxon>
        <taxon>Gammaproteobacteria</taxon>
        <taxon>Legionellales</taxon>
        <taxon>Legionellaceae</taxon>
        <taxon>Legionella</taxon>
    </lineage>
</organism>
<accession>Q5WX47</accession>
<evidence type="ECO:0000255" key="1">
    <source>
        <dbReference type="HAMAP-Rule" id="MF_00031"/>
    </source>
</evidence>
<dbReference type="EMBL" id="CR628337">
    <property type="protein sequence ID" value="CAH15490.1"/>
    <property type="molecule type" value="Genomic_DNA"/>
</dbReference>
<dbReference type="RefSeq" id="WP_011213600.1">
    <property type="nucleotide sequence ID" value="NC_006369.1"/>
</dbReference>
<dbReference type="SMR" id="Q5WX47"/>
<dbReference type="KEGG" id="lpf:lpl1251"/>
<dbReference type="LegioList" id="lpl1251"/>
<dbReference type="HOGENOM" id="CLU_087936_0_0_6"/>
<dbReference type="Proteomes" id="UP000002517">
    <property type="component" value="Chromosome"/>
</dbReference>
<dbReference type="GO" id="GO:0005737">
    <property type="term" value="C:cytoplasm"/>
    <property type="evidence" value="ECO:0007669"/>
    <property type="project" value="UniProtKB-SubCell"/>
</dbReference>
<dbReference type="GO" id="GO:0009379">
    <property type="term" value="C:Holliday junction helicase complex"/>
    <property type="evidence" value="ECO:0007669"/>
    <property type="project" value="InterPro"/>
</dbReference>
<dbReference type="GO" id="GO:0048476">
    <property type="term" value="C:Holliday junction resolvase complex"/>
    <property type="evidence" value="ECO:0007669"/>
    <property type="project" value="UniProtKB-UniRule"/>
</dbReference>
<dbReference type="GO" id="GO:0005524">
    <property type="term" value="F:ATP binding"/>
    <property type="evidence" value="ECO:0007669"/>
    <property type="project" value="InterPro"/>
</dbReference>
<dbReference type="GO" id="GO:0000400">
    <property type="term" value="F:four-way junction DNA binding"/>
    <property type="evidence" value="ECO:0007669"/>
    <property type="project" value="UniProtKB-UniRule"/>
</dbReference>
<dbReference type="GO" id="GO:0009378">
    <property type="term" value="F:four-way junction helicase activity"/>
    <property type="evidence" value="ECO:0007669"/>
    <property type="project" value="InterPro"/>
</dbReference>
<dbReference type="GO" id="GO:0006310">
    <property type="term" value="P:DNA recombination"/>
    <property type="evidence" value="ECO:0007669"/>
    <property type="project" value="UniProtKB-UniRule"/>
</dbReference>
<dbReference type="GO" id="GO:0006281">
    <property type="term" value="P:DNA repair"/>
    <property type="evidence" value="ECO:0007669"/>
    <property type="project" value="UniProtKB-UniRule"/>
</dbReference>
<dbReference type="CDD" id="cd14332">
    <property type="entry name" value="UBA_RuvA_C"/>
    <property type="match status" value="1"/>
</dbReference>
<dbReference type="Gene3D" id="1.10.150.20">
    <property type="entry name" value="5' to 3' exonuclease, C-terminal subdomain"/>
    <property type="match status" value="1"/>
</dbReference>
<dbReference type="Gene3D" id="1.10.8.10">
    <property type="entry name" value="DNA helicase RuvA subunit, C-terminal domain"/>
    <property type="match status" value="1"/>
</dbReference>
<dbReference type="Gene3D" id="2.40.50.140">
    <property type="entry name" value="Nucleic acid-binding proteins"/>
    <property type="match status" value="1"/>
</dbReference>
<dbReference type="HAMAP" id="MF_00031">
    <property type="entry name" value="DNA_HJ_migration_RuvA"/>
    <property type="match status" value="1"/>
</dbReference>
<dbReference type="InterPro" id="IPR013849">
    <property type="entry name" value="DNA_helicase_Holl-junc_RuvA_I"/>
</dbReference>
<dbReference type="InterPro" id="IPR003583">
    <property type="entry name" value="Hlx-hairpin-Hlx_DNA-bd_motif"/>
</dbReference>
<dbReference type="InterPro" id="IPR012340">
    <property type="entry name" value="NA-bd_OB-fold"/>
</dbReference>
<dbReference type="InterPro" id="IPR000085">
    <property type="entry name" value="RuvA"/>
</dbReference>
<dbReference type="InterPro" id="IPR010994">
    <property type="entry name" value="RuvA_2-like"/>
</dbReference>
<dbReference type="InterPro" id="IPR011114">
    <property type="entry name" value="RuvA_C"/>
</dbReference>
<dbReference type="InterPro" id="IPR036267">
    <property type="entry name" value="RuvA_C_sf"/>
</dbReference>
<dbReference type="NCBIfam" id="TIGR00084">
    <property type="entry name" value="ruvA"/>
    <property type="match status" value="1"/>
</dbReference>
<dbReference type="Pfam" id="PF14520">
    <property type="entry name" value="HHH_5"/>
    <property type="match status" value="1"/>
</dbReference>
<dbReference type="Pfam" id="PF07499">
    <property type="entry name" value="RuvA_C"/>
    <property type="match status" value="1"/>
</dbReference>
<dbReference type="Pfam" id="PF01330">
    <property type="entry name" value="RuvA_N"/>
    <property type="match status" value="1"/>
</dbReference>
<dbReference type="SMART" id="SM00278">
    <property type="entry name" value="HhH1"/>
    <property type="match status" value="2"/>
</dbReference>
<dbReference type="SUPFAM" id="SSF46929">
    <property type="entry name" value="DNA helicase RuvA subunit, C-terminal domain"/>
    <property type="match status" value="1"/>
</dbReference>
<dbReference type="SUPFAM" id="SSF50249">
    <property type="entry name" value="Nucleic acid-binding proteins"/>
    <property type="match status" value="1"/>
</dbReference>
<dbReference type="SUPFAM" id="SSF47781">
    <property type="entry name" value="RuvA domain 2-like"/>
    <property type="match status" value="1"/>
</dbReference>
<proteinExistence type="inferred from homology"/>